<accession>Q9V287</accession>
<accession>G8ZG22</accession>
<name>PAN_PYRAB</name>
<organism>
    <name type="scientific">Pyrococcus abyssi (strain GE5 / Orsay)</name>
    <dbReference type="NCBI Taxonomy" id="272844"/>
    <lineage>
        <taxon>Archaea</taxon>
        <taxon>Methanobacteriati</taxon>
        <taxon>Methanobacteriota</taxon>
        <taxon>Thermococci</taxon>
        <taxon>Thermococcales</taxon>
        <taxon>Thermococcaceae</taxon>
        <taxon>Pyrococcus</taxon>
    </lineage>
</organism>
<comment type="function">
    <text evidence="1">ATPase which is responsible for recognizing, binding, unfolding and translocation of substrate proteins into the archaeal 20S proteasome core particle. Is essential for opening the gate of the 20S proteasome via an interaction with its C-terminus, thereby allowing substrate entry and access to the site of proteolysis. Thus, the C-termini of the proteasomal ATPase function like a 'key in a lock' to induce gate opening and therefore regulate proteolysis. Unfolding activity requires energy from ATP hydrolysis, whereas ATP binding alone promotes ATPase-20S proteasome association which triggers gate opening, and supports translocation of unfolded substrates.</text>
</comment>
<comment type="subunit">
    <text evidence="1">Homohexamer. The hexameric complex has a two-ring architecture resembling a top hat that caps the 20S proteasome core at one or both ends. Upon ATP-binding, the C-terminus of PAN interacts with the alpha-rings of the proteasome core by binding to the intersubunit pockets.</text>
</comment>
<comment type="subcellular location">
    <subcellularLocation>
        <location evidence="1">Cytoplasm</location>
    </subcellularLocation>
</comment>
<comment type="domain">
    <text evidence="1">Consists of three main regions, an N-terminal coiled-coil domain that may assist in substrate recognition, an interdomain involved in PAN hexamerization, and a C-terminal ATPase domain of the AAA type.</text>
</comment>
<comment type="similarity">
    <text evidence="1">Belongs to the AAA ATPase family.</text>
</comment>
<comment type="sequence caution" evidence="2">
    <conflict type="erroneous initiation">
        <sequence resource="EMBL-CDS" id="CAB49111"/>
    </conflict>
    <text>Extended N-terminus.</text>
</comment>
<keyword id="KW-0067">ATP-binding</keyword>
<keyword id="KW-0143">Chaperone</keyword>
<keyword id="KW-0175">Coiled coil</keyword>
<keyword id="KW-0963">Cytoplasm</keyword>
<keyword id="KW-0547">Nucleotide-binding</keyword>
<keyword id="KW-0647">Proteasome</keyword>
<protein>
    <recommendedName>
        <fullName evidence="1">Proteasome-activating nucleotidase</fullName>
        <shortName evidence="1">PAN</shortName>
    </recommendedName>
    <alternativeName>
        <fullName evidence="1">Proteasomal ATPase</fullName>
    </alternativeName>
    <alternativeName>
        <fullName evidence="1">Proteasome regulatory ATPase</fullName>
    </alternativeName>
    <alternativeName>
        <fullName evidence="1">Proteasome regulatory particle</fullName>
    </alternativeName>
</protein>
<dbReference type="EMBL" id="AJ248283">
    <property type="protein sequence ID" value="CAB49111.1"/>
    <property type="status" value="ALT_INIT"/>
    <property type="molecule type" value="Genomic_DNA"/>
</dbReference>
<dbReference type="EMBL" id="HE613800">
    <property type="protein sequence ID" value="CCE69563.1"/>
    <property type="molecule type" value="Genomic_DNA"/>
</dbReference>
<dbReference type="PIR" id="H75207">
    <property type="entry name" value="H75207"/>
</dbReference>
<dbReference type="RefSeq" id="WP_048146504.1">
    <property type="nucleotide sequence ID" value="NC_000868.1"/>
</dbReference>
<dbReference type="SMR" id="Q9V287"/>
<dbReference type="STRING" id="272844.PAB2233"/>
<dbReference type="KEGG" id="pab:PAB2233"/>
<dbReference type="PATRIC" id="fig|272844.11.peg.201"/>
<dbReference type="eggNOG" id="arCOG01306">
    <property type="taxonomic scope" value="Archaea"/>
</dbReference>
<dbReference type="HOGENOM" id="CLU_000688_2_0_2"/>
<dbReference type="OrthoDB" id="77269at2157"/>
<dbReference type="Proteomes" id="UP000000810">
    <property type="component" value="Chromosome"/>
</dbReference>
<dbReference type="Proteomes" id="UP000009139">
    <property type="component" value="Chromosome"/>
</dbReference>
<dbReference type="GO" id="GO:0005737">
    <property type="term" value="C:cytoplasm"/>
    <property type="evidence" value="ECO:0007669"/>
    <property type="project" value="UniProtKB-SubCell"/>
</dbReference>
<dbReference type="GO" id="GO:0022623">
    <property type="term" value="C:proteasome-activating nucleotidase complex"/>
    <property type="evidence" value="ECO:0007669"/>
    <property type="project" value="UniProtKB-UniRule"/>
</dbReference>
<dbReference type="GO" id="GO:0005524">
    <property type="term" value="F:ATP binding"/>
    <property type="evidence" value="ECO:0007669"/>
    <property type="project" value="UniProtKB-UniRule"/>
</dbReference>
<dbReference type="GO" id="GO:0016887">
    <property type="term" value="F:ATP hydrolysis activity"/>
    <property type="evidence" value="ECO:0007669"/>
    <property type="project" value="UniProtKB-UniRule"/>
</dbReference>
<dbReference type="GO" id="GO:0010498">
    <property type="term" value="P:proteasomal protein catabolic process"/>
    <property type="evidence" value="ECO:0007669"/>
    <property type="project" value="UniProtKB-UniRule"/>
</dbReference>
<dbReference type="GO" id="GO:0043335">
    <property type="term" value="P:protein unfolding"/>
    <property type="evidence" value="ECO:0007669"/>
    <property type="project" value="UniProtKB-UniRule"/>
</dbReference>
<dbReference type="CDD" id="cd19502">
    <property type="entry name" value="RecA-like_PAN_like"/>
    <property type="match status" value="1"/>
</dbReference>
<dbReference type="FunFam" id="3.40.50.300:FF:000033">
    <property type="entry name" value="26S protease regulatory subunit 6B"/>
    <property type="match status" value="1"/>
</dbReference>
<dbReference type="FunFam" id="1.10.8.60:FF:000006">
    <property type="entry name" value="26S protease regulatory subunit 8"/>
    <property type="match status" value="1"/>
</dbReference>
<dbReference type="Gene3D" id="1.10.8.60">
    <property type="match status" value="1"/>
</dbReference>
<dbReference type="Gene3D" id="2.40.50.140">
    <property type="entry name" value="Nucleic acid-binding proteins"/>
    <property type="match status" value="1"/>
</dbReference>
<dbReference type="Gene3D" id="3.40.50.300">
    <property type="entry name" value="P-loop containing nucleotide triphosphate hydrolases"/>
    <property type="match status" value="1"/>
</dbReference>
<dbReference type="HAMAP" id="MF_00553">
    <property type="entry name" value="PAN"/>
    <property type="match status" value="1"/>
</dbReference>
<dbReference type="InterPro" id="IPR050221">
    <property type="entry name" value="26S_Proteasome_ATPase"/>
</dbReference>
<dbReference type="InterPro" id="IPR003593">
    <property type="entry name" value="AAA+_ATPase"/>
</dbReference>
<dbReference type="InterPro" id="IPR041569">
    <property type="entry name" value="AAA_lid_3"/>
</dbReference>
<dbReference type="InterPro" id="IPR003959">
    <property type="entry name" value="ATPase_AAA_core"/>
</dbReference>
<dbReference type="InterPro" id="IPR003960">
    <property type="entry name" value="ATPase_AAA_CS"/>
</dbReference>
<dbReference type="InterPro" id="IPR012340">
    <property type="entry name" value="NA-bd_OB-fold"/>
</dbReference>
<dbReference type="InterPro" id="IPR023501">
    <property type="entry name" value="Nucleotidase_PAN"/>
</dbReference>
<dbReference type="InterPro" id="IPR027417">
    <property type="entry name" value="P-loop_NTPase"/>
</dbReference>
<dbReference type="InterPro" id="IPR032501">
    <property type="entry name" value="Prot_ATP_ID_OB_2nd"/>
</dbReference>
<dbReference type="NCBIfam" id="NF003069">
    <property type="entry name" value="PRK03992.1"/>
    <property type="match status" value="1"/>
</dbReference>
<dbReference type="NCBIfam" id="TIGR01242">
    <property type="entry name" value="proteasome-activating nucleotidase"/>
    <property type="match status" value="1"/>
</dbReference>
<dbReference type="PANTHER" id="PTHR23073">
    <property type="entry name" value="26S PROTEASOME REGULATORY SUBUNIT"/>
    <property type="match status" value="1"/>
</dbReference>
<dbReference type="Pfam" id="PF00004">
    <property type="entry name" value="AAA"/>
    <property type="match status" value="1"/>
</dbReference>
<dbReference type="Pfam" id="PF17862">
    <property type="entry name" value="AAA_lid_3"/>
    <property type="match status" value="1"/>
</dbReference>
<dbReference type="Pfam" id="PF16450">
    <property type="entry name" value="Prot_ATP_ID_OB_C"/>
    <property type="match status" value="1"/>
</dbReference>
<dbReference type="SMART" id="SM00382">
    <property type="entry name" value="AAA"/>
    <property type="match status" value="1"/>
</dbReference>
<dbReference type="SUPFAM" id="SSF52540">
    <property type="entry name" value="P-loop containing nucleoside triphosphate hydrolases"/>
    <property type="match status" value="1"/>
</dbReference>
<dbReference type="PROSITE" id="PS00674">
    <property type="entry name" value="AAA"/>
    <property type="match status" value="1"/>
</dbReference>
<proteinExistence type="inferred from homology"/>
<feature type="chain" id="PRO_0000084748" description="Proteasome-activating nucleotidase">
    <location>
        <begin position="1"/>
        <end position="396"/>
    </location>
</feature>
<feature type="region of interest" description="Docks into pockets in the proteasome alpha-ring to cause gate opening" evidence="1">
    <location>
        <begin position="394"/>
        <end position="396"/>
    </location>
</feature>
<feature type="coiled-coil region" evidence="1">
    <location>
        <begin position="16"/>
        <end position="57"/>
    </location>
</feature>
<feature type="binding site" evidence="1">
    <location>
        <begin position="181"/>
        <end position="186"/>
    </location>
    <ligand>
        <name>ATP</name>
        <dbReference type="ChEBI" id="CHEBI:30616"/>
    </ligand>
</feature>
<feature type="binding site" evidence="1">
    <location>
        <position position="320"/>
    </location>
    <ligand>
        <name>ATP</name>
        <dbReference type="ChEBI" id="CHEBI:30616"/>
    </ligand>
</feature>
<evidence type="ECO:0000255" key="1">
    <source>
        <dbReference type="HAMAP-Rule" id="MF_00553"/>
    </source>
</evidence>
<evidence type="ECO:0000305" key="2"/>
<sequence>MSGDEVQFHENYDDYITYLKRRIRQLELQVRMLEADKERLERELSRLRSEMSRLRQPPAFAGTVIEVLDDDRAIVQNYNGPRFVVRIAPWIERDKLRPGARVALDQRTMAIIELLPSSKDPTVLGFEVIERPNVTYNDIGGLKKQLQELREAIELPLKHPELFEEVGIDPPKGVLLYGPPGCGKTLMAKALAHEVNATFIRVVGSELVRKYIGEGARLVHELFELAKEKAPTIIFIDEIDAIGAKRMDETTGGEREVNRTLMQLLAEMDGFDPRGNVKVIAATNRPDILDPALLRPGRFDRLIEVPLPDFEGRLEILKVHTRRMKLKNVDLRVIAEITEGASGADLKAIATEAGMFAIRERRTYVTQEDFLKAVDKVLGNERKLLQQITSHEIIYG</sequence>
<gene>
    <name evidence="1" type="primary">pan</name>
    <name type="ordered locus">PYRAB01870</name>
    <name type="ORF">PAB2233</name>
</gene>
<reference key="1">
    <citation type="journal article" date="2003" name="Mol. Microbiol.">
        <title>An integrated analysis of the genome of the hyperthermophilic archaeon Pyrococcus abyssi.</title>
        <authorList>
            <person name="Cohen G.N."/>
            <person name="Barbe V."/>
            <person name="Flament D."/>
            <person name="Galperin M."/>
            <person name="Heilig R."/>
            <person name="Lecompte O."/>
            <person name="Poch O."/>
            <person name="Prieur D."/>
            <person name="Querellou J."/>
            <person name="Ripp R."/>
            <person name="Thierry J.-C."/>
            <person name="Van der Oost J."/>
            <person name="Weissenbach J."/>
            <person name="Zivanovic Y."/>
            <person name="Forterre P."/>
        </authorList>
    </citation>
    <scope>NUCLEOTIDE SEQUENCE [LARGE SCALE GENOMIC DNA]</scope>
    <source>
        <strain>GE5 / Orsay</strain>
    </source>
</reference>
<reference key="2">
    <citation type="journal article" date="2012" name="Curr. Microbiol.">
        <title>Re-annotation of two hyperthermophilic archaea Pyrococcus abyssi GE5 and Pyrococcus furiosus DSM 3638.</title>
        <authorList>
            <person name="Gao J."/>
            <person name="Wang J."/>
        </authorList>
    </citation>
    <scope>GENOME REANNOTATION</scope>
    <source>
        <strain>GE5 / Orsay</strain>
    </source>
</reference>